<feature type="chain" id="PRO_0000249341" description="3'-5' RNA helicase YTHDC2">
    <location>
        <begin position="1"/>
        <end position="1430"/>
    </location>
</feature>
<feature type="domain" description="R3H" evidence="6">
    <location>
        <begin position="38"/>
        <end position="106"/>
    </location>
</feature>
<feature type="domain" description="Helicase ATP-binding" evidence="7">
    <location>
        <begin position="203"/>
        <end position="369"/>
    </location>
</feature>
<feature type="repeat" description="ANK 1" evidence="3">
    <location>
        <begin position="506"/>
        <end position="538"/>
    </location>
</feature>
<feature type="repeat" description="ANK 2" evidence="3">
    <location>
        <begin position="539"/>
        <end position="571"/>
    </location>
</feature>
<feature type="domain" description="Helicase C-terminal" evidence="8">
    <location>
        <begin position="612"/>
        <end position="784"/>
    </location>
</feature>
<feature type="domain" description="YTH" evidence="5">
    <location>
        <begin position="1288"/>
        <end position="1418"/>
    </location>
</feature>
<feature type="region of interest" description="Disordered" evidence="9">
    <location>
        <begin position="1"/>
        <end position="37"/>
    </location>
</feature>
<feature type="region of interest" description="Disordered" evidence="9">
    <location>
        <begin position="1164"/>
        <end position="1288"/>
    </location>
</feature>
<feature type="short sequence motif" description="DEAH box" evidence="3">
    <location>
        <begin position="316"/>
        <end position="319"/>
    </location>
</feature>
<feature type="compositionally biased region" description="Gly residues" evidence="9">
    <location>
        <begin position="14"/>
        <end position="33"/>
    </location>
</feature>
<feature type="compositionally biased region" description="Polar residues" evidence="9">
    <location>
        <begin position="1164"/>
        <end position="1174"/>
    </location>
</feature>
<feature type="compositionally biased region" description="Low complexity" evidence="9">
    <location>
        <begin position="1191"/>
        <end position="1200"/>
    </location>
</feature>
<feature type="compositionally biased region" description="Basic and acidic residues" evidence="9">
    <location>
        <begin position="1231"/>
        <end position="1249"/>
    </location>
</feature>
<feature type="compositionally biased region" description="Low complexity" evidence="9">
    <location>
        <begin position="1250"/>
        <end position="1264"/>
    </location>
</feature>
<feature type="binding site" evidence="7">
    <location>
        <begin position="216"/>
        <end position="223"/>
    </location>
    <ligand>
        <name>ATP</name>
        <dbReference type="ChEBI" id="CHEBI:30616"/>
    </ligand>
</feature>
<feature type="binding site" evidence="4">
    <location>
        <begin position="1294"/>
        <end position="1296"/>
    </location>
    <ligand>
        <name>RNA</name>
        <dbReference type="ChEBI" id="CHEBI:33697"/>
    </ligand>
    <ligandPart>
        <name>N(6)-methyladenosine 5'-phosphate residue</name>
        <dbReference type="ChEBI" id="CHEBI:74449"/>
    </ligandPart>
</feature>
<feature type="binding site" evidence="2">
    <location>
        <position position="1310"/>
    </location>
    <ligand>
        <name>RNA</name>
        <dbReference type="ChEBI" id="CHEBI:33697"/>
    </ligand>
    <ligandPart>
        <name>N(6)-methyladenosine 5'-phosphate residue</name>
        <dbReference type="ChEBI" id="CHEBI:74449"/>
    </ligandPart>
</feature>
<feature type="binding site" evidence="2">
    <location>
        <position position="1360"/>
    </location>
    <ligand>
        <name>RNA</name>
        <dbReference type="ChEBI" id="CHEBI:33697"/>
    </ligand>
    <ligandPart>
        <name>N(6)-methyladenosine 5'-phosphate residue</name>
        <dbReference type="ChEBI" id="CHEBI:74449"/>
    </ligandPart>
</feature>
<feature type="modified residue" description="Phosphoserine" evidence="3">
    <location>
        <position position="1089"/>
    </location>
</feature>
<feature type="modified residue" description="Phosphoserine" evidence="1">
    <location>
        <position position="1090"/>
    </location>
</feature>
<feature type="modified residue" description="Phosphoserine" evidence="3">
    <location>
        <position position="1092"/>
    </location>
</feature>
<feature type="modified residue" description="Phosphoserine" evidence="3">
    <location>
        <position position="1202"/>
    </location>
</feature>
<feature type="modified residue" description="Phosphoserine" evidence="1">
    <location>
        <position position="1263"/>
    </location>
</feature>
<feature type="modified residue" description="Phosphoserine" evidence="1">
    <location>
        <position position="1267"/>
    </location>
</feature>
<feature type="modified residue" description="Phosphoserine" evidence="3">
    <location>
        <position position="1281"/>
    </location>
</feature>
<dbReference type="EC" id="3.6.4.13" evidence="1"/>
<dbReference type="EMBL" id="NDHI03003367">
    <property type="protein sequence ID" value="PNJ80467.1"/>
    <property type="molecule type" value="Genomic_DNA"/>
</dbReference>
<dbReference type="EMBL" id="CR860272">
    <property type="protein sequence ID" value="CAH92414.1"/>
    <property type="status" value="ALT_INIT"/>
    <property type="molecule type" value="mRNA"/>
</dbReference>
<dbReference type="RefSeq" id="NP_001126423.2">
    <property type="nucleotide sequence ID" value="NM_001132951.3"/>
</dbReference>
<dbReference type="SMR" id="Q5R746"/>
<dbReference type="FunCoup" id="Q5R746">
    <property type="interactions" value="2584"/>
</dbReference>
<dbReference type="STRING" id="9601.ENSPPYP00000017549"/>
<dbReference type="Ensembl" id="ENSPPYT00000018258.3">
    <property type="protein sequence ID" value="ENSPPYP00000017549.3"/>
    <property type="gene ID" value="ENSPPYG00000015691.3"/>
</dbReference>
<dbReference type="GeneID" id="100173406"/>
<dbReference type="KEGG" id="pon:100173406"/>
<dbReference type="CTD" id="64848"/>
<dbReference type="eggNOG" id="KOG0920">
    <property type="taxonomic scope" value="Eukaryota"/>
</dbReference>
<dbReference type="eggNOG" id="KOG0922">
    <property type="taxonomic scope" value="Eukaryota"/>
</dbReference>
<dbReference type="eggNOG" id="KOG1902">
    <property type="taxonomic scope" value="Eukaryota"/>
</dbReference>
<dbReference type="GeneTree" id="ENSGT00940000155826"/>
<dbReference type="InParanoid" id="Q5R746"/>
<dbReference type="OrthoDB" id="6103986at2759"/>
<dbReference type="Proteomes" id="UP000001595">
    <property type="component" value="Chromosome 5"/>
</dbReference>
<dbReference type="GO" id="GO:0005737">
    <property type="term" value="C:cytoplasm"/>
    <property type="evidence" value="ECO:0000250"/>
    <property type="project" value="UniProtKB"/>
</dbReference>
<dbReference type="GO" id="GO:0048471">
    <property type="term" value="C:perinuclear region of cytoplasm"/>
    <property type="evidence" value="ECO:0007669"/>
    <property type="project" value="UniProtKB-SubCell"/>
</dbReference>
<dbReference type="GO" id="GO:0035770">
    <property type="term" value="C:ribonucleoprotein granule"/>
    <property type="evidence" value="ECO:0000250"/>
    <property type="project" value="UniProtKB"/>
</dbReference>
<dbReference type="GO" id="GO:0034458">
    <property type="term" value="F:3'-5' RNA helicase activity"/>
    <property type="evidence" value="ECO:0000250"/>
    <property type="project" value="UniProtKB"/>
</dbReference>
<dbReference type="GO" id="GO:0005524">
    <property type="term" value="F:ATP binding"/>
    <property type="evidence" value="ECO:0007669"/>
    <property type="project" value="UniProtKB-KW"/>
</dbReference>
<dbReference type="GO" id="GO:0016887">
    <property type="term" value="F:ATP hydrolysis activity"/>
    <property type="evidence" value="ECO:0007669"/>
    <property type="project" value="RHEA"/>
</dbReference>
<dbReference type="GO" id="GO:1990247">
    <property type="term" value="F:N6-methyladenosine-containing RNA reader activity"/>
    <property type="evidence" value="ECO:0000250"/>
    <property type="project" value="UniProtKB"/>
</dbReference>
<dbReference type="GO" id="GO:0003723">
    <property type="term" value="F:RNA binding"/>
    <property type="evidence" value="ECO:0000250"/>
    <property type="project" value="UniProtKB"/>
</dbReference>
<dbReference type="GO" id="GO:0051729">
    <property type="term" value="P:germline cell cycle switching, mitotic to meiotic cell cycle"/>
    <property type="evidence" value="ECO:0000250"/>
    <property type="project" value="UniProtKB"/>
</dbReference>
<dbReference type="GO" id="GO:0051321">
    <property type="term" value="P:meiotic cell cycle"/>
    <property type="evidence" value="ECO:0007669"/>
    <property type="project" value="UniProtKB-KW"/>
</dbReference>
<dbReference type="GO" id="GO:0048599">
    <property type="term" value="P:oocyte development"/>
    <property type="evidence" value="ECO:0000250"/>
    <property type="project" value="UniProtKB"/>
</dbReference>
<dbReference type="GO" id="GO:0007286">
    <property type="term" value="P:spermatid development"/>
    <property type="evidence" value="ECO:0000250"/>
    <property type="project" value="UniProtKB"/>
</dbReference>
<dbReference type="CDD" id="cd17987">
    <property type="entry name" value="DEXHc_YTHDC2"/>
    <property type="match status" value="1"/>
</dbReference>
<dbReference type="CDD" id="cd06007">
    <property type="entry name" value="R3H_DEXH_helicase"/>
    <property type="match status" value="1"/>
</dbReference>
<dbReference type="CDD" id="cd18791">
    <property type="entry name" value="SF2_C_RHA"/>
    <property type="match status" value="1"/>
</dbReference>
<dbReference type="CDD" id="cd21134">
    <property type="entry name" value="YTH"/>
    <property type="match status" value="1"/>
</dbReference>
<dbReference type="FunFam" id="1.20.120.1080:FF:000008">
    <property type="entry name" value="probable ATP-dependent RNA helicase YTHDC2"/>
    <property type="match status" value="1"/>
</dbReference>
<dbReference type="FunFam" id="3.10.590.10:FF:000004">
    <property type="entry name" value="probable ATP-dependent RNA helicase YTHDC2"/>
    <property type="match status" value="1"/>
</dbReference>
<dbReference type="FunFam" id="3.30.1370.50:FF:000005">
    <property type="entry name" value="probable ATP-dependent RNA helicase YTHDC2"/>
    <property type="match status" value="1"/>
</dbReference>
<dbReference type="FunFam" id="3.40.50.300:FF:000284">
    <property type="entry name" value="probable ATP-dependent RNA helicase YTHDC2"/>
    <property type="match status" value="1"/>
</dbReference>
<dbReference type="FunFam" id="3.40.50.300:FF:000811">
    <property type="entry name" value="probable ATP-dependent RNA helicase YTHDC2"/>
    <property type="match status" value="1"/>
</dbReference>
<dbReference type="FunFam" id="1.25.40.20:FF:000492">
    <property type="entry name" value="YTH domain-containing 2"/>
    <property type="match status" value="1"/>
</dbReference>
<dbReference type="Gene3D" id="1.20.120.1080">
    <property type="match status" value="1"/>
</dbReference>
<dbReference type="Gene3D" id="1.25.40.20">
    <property type="entry name" value="Ankyrin repeat-containing domain"/>
    <property type="match status" value="1"/>
</dbReference>
<dbReference type="Gene3D" id="3.40.50.300">
    <property type="entry name" value="P-loop containing nucleotide triphosphate hydrolases"/>
    <property type="match status" value="2"/>
</dbReference>
<dbReference type="Gene3D" id="3.10.590.10">
    <property type="entry name" value="ph1033 like domains"/>
    <property type="match status" value="1"/>
</dbReference>
<dbReference type="Gene3D" id="3.30.1370.50">
    <property type="entry name" value="R3H-like domain"/>
    <property type="match status" value="1"/>
</dbReference>
<dbReference type="InterPro" id="IPR002110">
    <property type="entry name" value="Ankyrin_rpt"/>
</dbReference>
<dbReference type="InterPro" id="IPR036770">
    <property type="entry name" value="Ankyrin_rpt-contain_sf"/>
</dbReference>
<dbReference type="InterPro" id="IPR011709">
    <property type="entry name" value="DEAD-box_helicase_OB_fold"/>
</dbReference>
<dbReference type="InterPro" id="IPR011545">
    <property type="entry name" value="DEAD/DEAH_box_helicase_dom"/>
</dbReference>
<dbReference type="InterPro" id="IPR048333">
    <property type="entry name" value="HA2_WH"/>
</dbReference>
<dbReference type="InterPro" id="IPR007502">
    <property type="entry name" value="Helicase-assoc_dom"/>
</dbReference>
<dbReference type="InterPro" id="IPR014001">
    <property type="entry name" value="Helicase_ATP-bd"/>
</dbReference>
<dbReference type="InterPro" id="IPR001650">
    <property type="entry name" value="Helicase_C-like"/>
</dbReference>
<dbReference type="InterPro" id="IPR027417">
    <property type="entry name" value="P-loop_NTPase"/>
</dbReference>
<dbReference type="InterPro" id="IPR034083">
    <property type="entry name" value="R3H_DEXH_helicase"/>
</dbReference>
<dbReference type="InterPro" id="IPR001374">
    <property type="entry name" value="R3H_dom"/>
</dbReference>
<dbReference type="InterPro" id="IPR036867">
    <property type="entry name" value="R3H_dom_sf"/>
</dbReference>
<dbReference type="InterPro" id="IPR007275">
    <property type="entry name" value="YTH_domain"/>
</dbReference>
<dbReference type="PANTHER" id="PTHR18934:SF213">
    <property type="entry name" value="3'-5' RNA HELICASE YTHDC2"/>
    <property type="match status" value="1"/>
</dbReference>
<dbReference type="PANTHER" id="PTHR18934">
    <property type="entry name" value="ATP-DEPENDENT RNA HELICASE"/>
    <property type="match status" value="1"/>
</dbReference>
<dbReference type="Pfam" id="PF00270">
    <property type="entry name" value="DEAD"/>
    <property type="match status" value="1"/>
</dbReference>
<dbReference type="Pfam" id="PF21010">
    <property type="entry name" value="HA2_C"/>
    <property type="match status" value="1"/>
</dbReference>
<dbReference type="Pfam" id="PF04408">
    <property type="entry name" value="HA2_N"/>
    <property type="match status" value="1"/>
</dbReference>
<dbReference type="Pfam" id="PF00271">
    <property type="entry name" value="Helicase_C"/>
    <property type="match status" value="1"/>
</dbReference>
<dbReference type="Pfam" id="PF07717">
    <property type="entry name" value="OB_NTP_bind"/>
    <property type="match status" value="1"/>
</dbReference>
<dbReference type="Pfam" id="PF01424">
    <property type="entry name" value="R3H"/>
    <property type="match status" value="1"/>
</dbReference>
<dbReference type="Pfam" id="PF04146">
    <property type="entry name" value="YTH"/>
    <property type="match status" value="1"/>
</dbReference>
<dbReference type="SMART" id="SM00487">
    <property type="entry name" value="DEXDc"/>
    <property type="match status" value="1"/>
</dbReference>
<dbReference type="SMART" id="SM00847">
    <property type="entry name" value="HA2"/>
    <property type="match status" value="1"/>
</dbReference>
<dbReference type="SMART" id="SM00490">
    <property type="entry name" value="HELICc"/>
    <property type="match status" value="1"/>
</dbReference>
<dbReference type="SMART" id="SM00393">
    <property type="entry name" value="R3H"/>
    <property type="match status" value="1"/>
</dbReference>
<dbReference type="SUPFAM" id="SSF48403">
    <property type="entry name" value="Ankyrin repeat"/>
    <property type="match status" value="1"/>
</dbReference>
<dbReference type="SUPFAM" id="SSF52540">
    <property type="entry name" value="P-loop containing nucleoside triphosphate hydrolases"/>
    <property type="match status" value="2"/>
</dbReference>
<dbReference type="SUPFAM" id="SSF82708">
    <property type="entry name" value="R3H domain"/>
    <property type="match status" value="1"/>
</dbReference>
<dbReference type="PROSITE" id="PS50297">
    <property type="entry name" value="ANK_REP_REGION"/>
    <property type="match status" value="1"/>
</dbReference>
<dbReference type="PROSITE" id="PS50088">
    <property type="entry name" value="ANK_REPEAT"/>
    <property type="match status" value="1"/>
</dbReference>
<dbReference type="PROSITE" id="PS51192">
    <property type="entry name" value="HELICASE_ATP_BIND_1"/>
    <property type="match status" value="1"/>
</dbReference>
<dbReference type="PROSITE" id="PS51194">
    <property type="entry name" value="HELICASE_CTER"/>
    <property type="match status" value="1"/>
</dbReference>
<dbReference type="PROSITE" id="PS51061">
    <property type="entry name" value="R3H"/>
    <property type="match status" value="1"/>
</dbReference>
<dbReference type="PROSITE" id="PS50882">
    <property type="entry name" value="YTH"/>
    <property type="match status" value="1"/>
</dbReference>
<proteinExistence type="evidence at transcript level"/>
<accession>Q5R746</accession>
<accession>A0A2J8XEL0</accession>
<name>YTDC2_PONAB</name>
<comment type="function">
    <text evidence="1">3'-5' RNA helicase that plays a key role in the male and female germline by promoting transition from mitotic to meiotic divisions in stem cells. Specifically recognizes and binds N6-methyladenosine (m6A)-containing RNAs, a modification present at internal sites of mRNAs and some non-coding RNAs that plays a role in the efficiency of RNA processing and stability. Essential for ensuring a successful progression of the meiotic program in the germline by regulating the level of m6A-containing RNAs. Acts by binding and promoting degradation of m6A-containing mRNAs: the 3'-5' RNA helicase activity is required for this process and RNA degradation may be mediated by XRN1 exoribonuclease. Required for both spermatogenesis and oogenesis.</text>
</comment>
<comment type="catalytic activity">
    <reaction evidence="1">
        <text>ATP + H2O = ADP + phosphate + H(+)</text>
        <dbReference type="Rhea" id="RHEA:13065"/>
        <dbReference type="ChEBI" id="CHEBI:15377"/>
        <dbReference type="ChEBI" id="CHEBI:15378"/>
        <dbReference type="ChEBI" id="CHEBI:30616"/>
        <dbReference type="ChEBI" id="CHEBI:43474"/>
        <dbReference type="ChEBI" id="CHEBI:456216"/>
        <dbReference type="EC" id="3.6.4.13"/>
    </reaction>
</comment>
<comment type="subunit">
    <text evidence="1 3">Interacts with MEIOC; binds transcripts that regulate the mitotic cell cycle inhibiting progression into metaphase, thereby allowing meiotic prophase to proceed normally (By similarity). Interacts (via ANK repeats) with XRN1. Interacts with ZCCHC4. Associates with the small ribosomal subunit (By similarity). Interacts with RBM46 (By similarity).</text>
</comment>
<comment type="subcellular location">
    <subcellularLocation>
        <location evidence="1">Cytoplasm</location>
    </subcellularLocation>
    <subcellularLocation>
        <location evidence="3">Cytoplasm</location>
        <location evidence="3">Perinuclear region</location>
    </subcellularLocation>
</comment>
<comment type="domain">
    <text evidence="3">The YTH domain mediates RNA-binding. It recognizes and binds N6-methyladenosine (m6A)-containing RNAs.</text>
</comment>
<comment type="similarity">
    <text evidence="10">Belongs to the DEAD box helicase family. DEAH subfamily.</text>
</comment>
<comment type="sequence caution" evidence="10">
    <conflict type="erroneous initiation">
        <sequence resource="EMBL-CDS" id="CAH92414"/>
    </conflict>
    <text>Truncated N-terminus.</text>
</comment>
<gene>
    <name evidence="1" type="primary">YTHDC2</name>
</gene>
<organism>
    <name type="scientific">Pongo abelii</name>
    <name type="common">Sumatran orangutan</name>
    <name type="synonym">Pongo pygmaeus abelii</name>
    <dbReference type="NCBI Taxonomy" id="9601"/>
    <lineage>
        <taxon>Eukaryota</taxon>
        <taxon>Metazoa</taxon>
        <taxon>Chordata</taxon>
        <taxon>Craniata</taxon>
        <taxon>Vertebrata</taxon>
        <taxon>Euteleostomi</taxon>
        <taxon>Mammalia</taxon>
        <taxon>Eutheria</taxon>
        <taxon>Euarchontoglires</taxon>
        <taxon>Primates</taxon>
        <taxon>Haplorrhini</taxon>
        <taxon>Catarrhini</taxon>
        <taxon>Hominidae</taxon>
        <taxon>Pongo</taxon>
    </lineage>
</organism>
<reference key="1">
    <citation type="submission" date="2017-12" db="EMBL/GenBank/DDBJ databases">
        <title>High-resolution comparative analysis of great ape genomes.</title>
        <authorList>
            <person name="Pollen A."/>
            <person name="Hastie A."/>
            <person name="Hormozdiari F."/>
            <person name="Dougherty M."/>
            <person name="Liu R."/>
            <person name="Chaisson M."/>
            <person name="Hoppe E."/>
            <person name="Hill C."/>
            <person name="Pang A."/>
            <person name="Hillier L."/>
            <person name="Baker C."/>
            <person name="Armstrong J."/>
            <person name="Shendure J."/>
            <person name="Paten B."/>
            <person name="Wilson R."/>
            <person name="Chao H."/>
            <person name="Schneider V."/>
            <person name="Ventura M."/>
            <person name="Kronenberg Z."/>
            <person name="Murali S."/>
            <person name="Gordon D."/>
            <person name="Cantsilieris S."/>
            <person name="Munson K."/>
            <person name="Nelson B."/>
            <person name="Raja A."/>
            <person name="Underwood J."/>
            <person name="Diekhans M."/>
            <person name="Fiddes I."/>
            <person name="Haussler D."/>
            <person name="Eichler E."/>
        </authorList>
    </citation>
    <scope>NUCLEOTIDE SEQUENCE [LARGE SCALE GENOMIC DNA]</scope>
</reference>
<reference key="2">
    <citation type="submission" date="2004-11" db="EMBL/GenBank/DDBJ databases">
        <authorList>
            <consortium name="The German cDNA consortium"/>
        </authorList>
    </citation>
    <scope>NUCLEOTIDE SEQUENCE [LARGE SCALE MRNA] OF 726-1430</scope>
    <source>
        <tissue>Brain cortex</tissue>
    </source>
</reference>
<keyword id="KW-0040">ANK repeat</keyword>
<keyword id="KW-0067">ATP-binding</keyword>
<keyword id="KW-0963">Cytoplasm</keyword>
<keyword id="KW-0221">Differentiation</keyword>
<keyword id="KW-0347">Helicase</keyword>
<keyword id="KW-0378">Hydrolase</keyword>
<keyword id="KW-0469">Meiosis</keyword>
<keyword id="KW-0547">Nucleotide-binding</keyword>
<keyword id="KW-0896">Oogenesis</keyword>
<keyword id="KW-0597">Phosphoprotein</keyword>
<keyword id="KW-1185">Reference proteome</keyword>
<keyword id="KW-0677">Repeat</keyword>
<keyword id="KW-0694">RNA-binding</keyword>
<keyword id="KW-0744">Spermatogenesis</keyword>
<sequence>MSRPSSVSPRQPAPGGGGGGGPSPCGPGGGGRAKGLKDIRIDEEVKIAVNIALERFRYGDQREMEFPSSLTSTERAFIHRLSQSLGLVSKSKGKGANRYLTVKKKDGSETAHAMMTCNLTHNTKHAVRSLIQRFPVTNKERTELLPKTERGNVFAVEAENREMSKTSGRLNNGIPQIPVKRGESEFDSFRQSLPVFEKQEEIVKIIKENKVVLIVGETGSGKTTQIPQFLLDDCFKNGIPCRIFCTQPRRLAAIAVAERVAAERRERIGQTIGYQIRLESRVSPKTLLTFCTNGVLLRTLMAGDSTLSTVTHVIVDEVHERDRFSDFLLTKLRDLLQKHPTLKLILSSAALDVNLFIRYFGSCPVIYIQGRPFEVKEMFLEDILRTTGYTNKEMLKYKKEKQQEEKQQTTLTEWYSAQENSFKPGSQRQRTVLNVTDEYDLLDDGGDAVFSQLTEKDVNCLEPWLVKEMDACLSDIWLHKDIDAFAQVFHLILTENVSVDYRHSETSATALMVAAGRGFASQVEQLISMGANVHSKASNGWMALDWAKHFGQTEIVDLLESYSASLEFGNLDESSLVQTNGSDLSAEDRELLKAYHHSFDDEKVDLDLIMHLLYNICHSCDAGAVLIFLPGYDEIVGLRDRILFDDKRFADNTHRYQVFMLHSNMQTSDQKKVLKNPPAGVRKIILSTNIAETSITVNDVVFVIDSGKVKEKSFDALNFVTMLKMVWISKASAIQRKGRAGRCRPGICFRLFSRLRFQNMLEFQTPELLRMPLQELCLHTKLLAPVNCPVADFLMKAPEPPPALIVRNAVQMLKTIDAMDTWEDLTELGYHLADLPVEPHLGKMVLCAVVLKCLDPILTIACTLAYRDPFVLPTQASQKRAAMLCRKRFTAGAFSDHMALLRAFQAWQKARSDGWERAFCEKNFLSQATMEIIIGMRTQLLGQLRASGFVRARGGGDIRDVNTNSENWAVVKAALVAGMYPNLVHVDRENLVLTGPKEKKVRFHPASVLSQPQYKKIPPANGQAAAIKALPTDWLIYDEMTRAHRIANIRCCSAVTPVTILVFCGPARLASNALQEPSSFRVDGIPNDSSDSEMEDKTTANLAALKLDEWLHFKLEPEAASLLLQLRQKWHSLFLRRMRAPSKPWSQVDEATIRAIIAVLSTEEQSAGLQQPSGIGQRPRPMSSEELPLASSWRSNNSRKSSADTEFSDECTTAERVLMKSPSPALHPPQKYKDRGILHPKRGTEDRSDQSSVKSTDSSSYPSPCASPSPPSSGKGSKSPSPRPNMPVRYFIMKSSNLRNLEISQQKGIWSTTPSNERKLNRAFWESSMVYLVFSVQGSGHFQGFSRMSSEIGREKSQDWGSAGLGGVFKVEWIRKESLPFQFAHHLLNPWNDNKKVQISRDGQELEPQVGEQLLQLWERLPLGEKNTTD</sequence>
<protein>
    <recommendedName>
        <fullName evidence="10">3'-5' RNA helicase YTHDC2</fullName>
        <ecNumber evidence="1">3.6.4.13</ecNumber>
    </recommendedName>
    <alternativeName>
        <fullName evidence="1">YTH domain-containing protein C2</fullName>
    </alternativeName>
</protein>
<evidence type="ECO:0000250" key="1">
    <source>
        <dbReference type="UniProtKB" id="B2RR83"/>
    </source>
</evidence>
<evidence type="ECO:0000250" key="2">
    <source>
        <dbReference type="UniProtKB" id="Q96MU7"/>
    </source>
</evidence>
<evidence type="ECO:0000250" key="3">
    <source>
        <dbReference type="UniProtKB" id="Q9H6S0"/>
    </source>
</evidence>
<evidence type="ECO:0000250" key="4">
    <source>
        <dbReference type="UniProtKB" id="Q9Y5A9"/>
    </source>
</evidence>
<evidence type="ECO:0000255" key="5">
    <source>
        <dbReference type="PROSITE-ProRule" id="PRU00225"/>
    </source>
</evidence>
<evidence type="ECO:0000255" key="6">
    <source>
        <dbReference type="PROSITE-ProRule" id="PRU00382"/>
    </source>
</evidence>
<evidence type="ECO:0000255" key="7">
    <source>
        <dbReference type="PROSITE-ProRule" id="PRU00541"/>
    </source>
</evidence>
<evidence type="ECO:0000255" key="8">
    <source>
        <dbReference type="PROSITE-ProRule" id="PRU00542"/>
    </source>
</evidence>
<evidence type="ECO:0000256" key="9">
    <source>
        <dbReference type="SAM" id="MobiDB-lite"/>
    </source>
</evidence>
<evidence type="ECO:0000305" key="10"/>